<keyword id="KW-0030">Aminoacyl-tRNA synthetase</keyword>
<keyword id="KW-0067">ATP-binding</keyword>
<keyword id="KW-0963">Cytoplasm</keyword>
<keyword id="KW-0436">Ligase</keyword>
<keyword id="KW-0547">Nucleotide-binding</keyword>
<keyword id="KW-0648">Protein biosynthesis</keyword>
<keyword id="KW-1185">Reference proteome</keyword>
<keyword id="KW-0694">RNA-binding</keyword>
<evidence type="ECO:0000255" key="1">
    <source>
        <dbReference type="HAMAP-Rule" id="MF_02006"/>
    </source>
</evidence>
<comment type="function">
    <text evidence="1">Catalyzes the attachment of tyrosine to tRNA(Tyr) in a two-step reaction: tyrosine is first activated by ATP to form Tyr-AMP and then transferred to the acceptor end of tRNA(Tyr).</text>
</comment>
<comment type="catalytic activity">
    <reaction evidence="1">
        <text>tRNA(Tyr) + L-tyrosine + ATP = L-tyrosyl-tRNA(Tyr) + AMP + diphosphate + H(+)</text>
        <dbReference type="Rhea" id="RHEA:10220"/>
        <dbReference type="Rhea" id="RHEA-COMP:9706"/>
        <dbReference type="Rhea" id="RHEA-COMP:9707"/>
        <dbReference type="ChEBI" id="CHEBI:15378"/>
        <dbReference type="ChEBI" id="CHEBI:30616"/>
        <dbReference type="ChEBI" id="CHEBI:33019"/>
        <dbReference type="ChEBI" id="CHEBI:58315"/>
        <dbReference type="ChEBI" id="CHEBI:78442"/>
        <dbReference type="ChEBI" id="CHEBI:78536"/>
        <dbReference type="ChEBI" id="CHEBI:456215"/>
        <dbReference type="EC" id="6.1.1.1"/>
    </reaction>
</comment>
<comment type="subunit">
    <text evidence="1">Homodimer.</text>
</comment>
<comment type="subcellular location">
    <subcellularLocation>
        <location evidence="1">Cytoplasm</location>
    </subcellularLocation>
</comment>
<comment type="similarity">
    <text evidence="1">Belongs to the class-I aminoacyl-tRNA synthetase family. TyrS type 1 subfamily.</text>
</comment>
<organism>
    <name type="scientific">Paracoccus denitrificans (strain Pd 1222)</name>
    <dbReference type="NCBI Taxonomy" id="318586"/>
    <lineage>
        <taxon>Bacteria</taxon>
        <taxon>Pseudomonadati</taxon>
        <taxon>Pseudomonadota</taxon>
        <taxon>Alphaproteobacteria</taxon>
        <taxon>Rhodobacterales</taxon>
        <taxon>Paracoccaceae</taxon>
        <taxon>Paracoccus</taxon>
    </lineage>
</organism>
<sequence length="414" mass="45435">MTYRAKSDFLNVMIERGYLADCTDMQALDDALIDGPVTAYIGYDATAASLHVGHLLNIMMLRWFQKTGNRPITLMGGGTTKVGDPSFRSEERPLLTPDKIDENIAGMKQVFARYLDYGDQGAMMLNNAEWLDSLNYLDFLRDIGRHFSVNRMLSFESVKSRLDREQSLSFLEFNYMILQAYDFLELYRRYGCRLQMGGSDQWGNIVNGIDLTRRVLDAEIWGLTSPLLTTSDGRKMGKSAGGAVWLNGAMLSPYEFWQFWRNTTDADVGRFLKLYTELPVEECDRLGALSGSEINAAKIILANEVTTLLHGADAAASAEATAREVFEQGGAGGDLEVVTLSADALASGLTVVQLLAQTGITASGKEAKRLIAEGGLRLNNEAVSDPQLAVDAALIGDGLKVSVGKKKHRMVQLG</sequence>
<proteinExistence type="inferred from homology"/>
<accession>A1B3B3</accession>
<dbReference type="EC" id="6.1.1.1" evidence="1"/>
<dbReference type="EMBL" id="CP000489">
    <property type="protein sequence ID" value="ABL70007.1"/>
    <property type="molecule type" value="Genomic_DNA"/>
</dbReference>
<dbReference type="RefSeq" id="WP_011748204.1">
    <property type="nucleotide sequence ID" value="NC_008686.1"/>
</dbReference>
<dbReference type="SMR" id="A1B3B3"/>
<dbReference type="STRING" id="318586.Pden_1913"/>
<dbReference type="EnsemblBacteria" id="ABL70007">
    <property type="protein sequence ID" value="ABL70007"/>
    <property type="gene ID" value="Pden_1913"/>
</dbReference>
<dbReference type="GeneID" id="93450312"/>
<dbReference type="KEGG" id="pde:Pden_1913"/>
<dbReference type="eggNOG" id="COG0162">
    <property type="taxonomic scope" value="Bacteria"/>
</dbReference>
<dbReference type="HOGENOM" id="CLU_024003_0_3_5"/>
<dbReference type="OrthoDB" id="9804243at2"/>
<dbReference type="Proteomes" id="UP000000361">
    <property type="component" value="Chromosome 1"/>
</dbReference>
<dbReference type="GO" id="GO:0005829">
    <property type="term" value="C:cytosol"/>
    <property type="evidence" value="ECO:0007669"/>
    <property type="project" value="TreeGrafter"/>
</dbReference>
<dbReference type="GO" id="GO:0005524">
    <property type="term" value="F:ATP binding"/>
    <property type="evidence" value="ECO:0007669"/>
    <property type="project" value="UniProtKB-UniRule"/>
</dbReference>
<dbReference type="GO" id="GO:0003723">
    <property type="term" value="F:RNA binding"/>
    <property type="evidence" value="ECO:0007669"/>
    <property type="project" value="UniProtKB-KW"/>
</dbReference>
<dbReference type="GO" id="GO:0004831">
    <property type="term" value="F:tyrosine-tRNA ligase activity"/>
    <property type="evidence" value="ECO:0007669"/>
    <property type="project" value="UniProtKB-UniRule"/>
</dbReference>
<dbReference type="GO" id="GO:0006437">
    <property type="term" value="P:tyrosyl-tRNA aminoacylation"/>
    <property type="evidence" value="ECO:0007669"/>
    <property type="project" value="UniProtKB-UniRule"/>
</dbReference>
<dbReference type="CDD" id="cd00805">
    <property type="entry name" value="TyrRS_core"/>
    <property type="match status" value="1"/>
</dbReference>
<dbReference type="FunFam" id="1.10.240.10:FF:000001">
    <property type="entry name" value="Tyrosine--tRNA ligase"/>
    <property type="match status" value="1"/>
</dbReference>
<dbReference type="FunFam" id="3.40.50.620:FF:000008">
    <property type="entry name" value="Tyrosine--tRNA ligase"/>
    <property type="match status" value="1"/>
</dbReference>
<dbReference type="Gene3D" id="3.40.50.620">
    <property type="entry name" value="HUPs"/>
    <property type="match status" value="1"/>
</dbReference>
<dbReference type="Gene3D" id="3.10.290.10">
    <property type="entry name" value="RNA-binding S4 domain"/>
    <property type="match status" value="1"/>
</dbReference>
<dbReference type="Gene3D" id="1.10.240.10">
    <property type="entry name" value="Tyrosyl-Transfer RNA Synthetase"/>
    <property type="match status" value="1"/>
</dbReference>
<dbReference type="HAMAP" id="MF_02006">
    <property type="entry name" value="Tyr_tRNA_synth_type1"/>
    <property type="match status" value="1"/>
</dbReference>
<dbReference type="InterPro" id="IPR002305">
    <property type="entry name" value="aa-tRNA-synth_Ic"/>
</dbReference>
<dbReference type="InterPro" id="IPR014729">
    <property type="entry name" value="Rossmann-like_a/b/a_fold"/>
</dbReference>
<dbReference type="InterPro" id="IPR036986">
    <property type="entry name" value="S4_RNA-bd_sf"/>
</dbReference>
<dbReference type="InterPro" id="IPR002307">
    <property type="entry name" value="Tyr-tRNA-ligase"/>
</dbReference>
<dbReference type="InterPro" id="IPR024088">
    <property type="entry name" value="Tyr-tRNA-ligase_bac-type"/>
</dbReference>
<dbReference type="InterPro" id="IPR024107">
    <property type="entry name" value="Tyr-tRNA-ligase_bac_1"/>
</dbReference>
<dbReference type="NCBIfam" id="TIGR00234">
    <property type="entry name" value="tyrS"/>
    <property type="match status" value="1"/>
</dbReference>
<dbReference type="PANTHER" id="PTHR11766:SF0">
    <property type="entry name" value="TYROSINE--TRNA LIGASE, MITOCHONDRIAL"/>
    <property type="match status" value="1"/>
</dbReference>
<dbReference type="PANTHER" id="PTHR11766">
    <property type="entry name" value="TYROSYL-TRNA SYNTHETASE"/>
    <property type="match status" value="1"/>
</dbReference>
<dbReference type="Pfam" id="PF00579">
    <property type="entry name" value="tRNA-synt_1b"/>
    <property type="match status" value="1"/>
</dbReference>
<dbReference type="PRINTS" id="PR01040">
    <property type="entry name" value="TRNASYNTHTYR"/>
</dbReference>
<dbReference type="SUPFAM" id="SSF55174">
    <property type="entry name" value="Alpha-L RNA-binding motif"/>
    <property type="match status" value="1"/>
</dbReference>
<dbReference type="SUPFAM" id="SSF52374">
    <property type="entry name" value="Nucleotidylyl transferase"/>
    <property type="match status" value="1"/>
</dbReference>
<dbReference type="PROSITE" id="PS50889">
    <property type="entry name" value="S4"/>
    <property type="match status" value="1"/>
</dbReference>
<name>SYY_PARDP</name>
<reference key="1">
    <citation type="submission" date="2006-12" db="EMBL/GenBank/DDBJ databases">
        <title>Complete sequence of chromosome 1 of Paracoccus denitrificans PD1222.</title>
        <authorList>
            <person name="Copeland A."/>
            <person name="Lucas S."/>
            <person name="Lapidus A."/>
            <person name="Barry K."/>
            <person name="Detter J.C."/>
            <person name="Glavina del Rio T."/>
            <person name="Hammon N."/>
            <person name="Israni S."/>
            <person name="Dalin E."/>
            <person name="Tice H."/>
            <person name="Pitluck S."/>
            <person name="Munk A.C."/>
            <person name="Brettin T."/>
            <person name="Bruce D."/>
            <person name="Han C."/>
            <person name="Tapia R."/>
            <person name="Gilna P."/>
            <person name="Schmutz J."/>
            <person name="Larimer F."/>
            <person name="Land M."/>
            <person name="Hauser L."/>
            <person name="Kyrpides N."/>
            <person name="Lykidis A."/>
            <person name="Spiro S."/>
            <person name="Richardson D.J."/>
            <person name="Moir J.W.B."/>
            <person name="Ferguson S.J."/>
            <person name="van Spanning R.J.M."/>
            <person name="Richardson P."/>
        </authorList>
    </citation>
    <scope>NUCLEOTIDE SEQUENCE [LARGE SCALE GENOMIC DNA]</scope>
    <source>
        <strain>Pd 1222</strain>
    </source>
</reference>
<feature type="chain" id="PRO_1000088608" description="Tyrosine--tRNA ligase">
    <location>
        <begin position="1"/>
        <end position="414"/>
    </location>
</feature>
<feature type="domain" description="S4 RNA-binding" evidence="1">
    <location>
        <begin position="349"/>
        <end position="414"/>
    </location>
</feature>
<feature type="short sequence motif" description="'HIGH' region">
    <location>
        <begin position="45"/>
        <end position="54"/>
    </location>
</feature>
<feature type="short sequence motif" description="'KMSKS' region">
    <location>
        <begin position="235"/>
        <end position="239"/>
    </location>
</feature>
<feature type="binding site" evidence="1">
    <location>
        <position position="40"/>
    </location>
    <ligand>
        <name>L-tyrosine</name>
        <dbReference type="ChEBI" id="CHEBI:58315"/>
    </ligand>
</feature>
<feature type="binding site" evidence="1">
    <location>
        <position position="175"/>
    </location>
    <ligand>
        <name>L-tyrosine</name>
        <dbReference type="ChEBI" id="CHEBI:58315"/>
    </ligand>
</feature>
<feature type="binding site" evidence="1">
    <location>
        <position position="179"/>
    </location>
    <ligand>
        <name>L-tyrosine</name>
        <dbReference type="ChEBI" id="CHEBI:58315"/>
    </ligand>
</feature>
<feature type="binding site" evidence="1">
    <location>
        <position position="238"/>
    </location>
    <ligand>
        <name>ATP</name>
        <dbReference type="ChEBI" id="CHEBI:30616"/>
    </ligand>
</feature>
<protein>
    <recommendedName>
        <fullName evidence="1">Tyrosine--tRNA ligase</fullName>
        <ecNumber evidence="1">6.1.1.1</ecNumber>
    </recommendedName>
    <alternativeName>
        <fullName evidence="1">Tyrosyl-tRNA synthetase</fullName>
        <shortName evidence="1">TyrRS</shortName>
    </alternativeName>
</protein>
<gene>
    <name evidence="1" type="primary">tyrS</name>
    <name type="ordered locus">Pden_1913</name>
</gene>